<name>NRFA_ECOSE</name>
<dbReference type="EC" id="1.7.2.2" evidence="1"/>
<dbReference type="EMBL" id="AP009240">
    <property type="protein sequence ID" value="BAG79889.1"/>
    <property type="molecule type" value="Genomic_DNA"/>
</dbReference>
<dbReference type="RefSeq" id="WP_000196875.1">
    <property type="nucleotide sequence ID" value="NC_011415.1"/>
</dbReference>
<dbReference type="SMR" id="B6I5T8"/>
<dbReference type="GeneID" id="93777759"/>
<dbReference type="KEGG" id="ecy:ECSE_4365"/>
<dbReference type="HOGENOM" id="CLU_035040_1_0_6"/>
<dbReference type="UniPathway" id="UPA00653"/>
<dbReference type="Proteomes" id="UP000008199">
    <property type="component" value="Chromosome"/>
</dbReference>
<dbReference type="GO" id="GO:0030288">
    <property type="term" value="C:outer membrane-bounded periplasmic space"/>
    <property type="evidence" value="ECO:0007669"/>
    <property type="project" value="TreeGrafter"/>
</dbReference>
<dbReference type="GO" id="GO:0005509">
    <property type="term" value="F:calcium ion binding"/>
    <property type="evidence" value="ECO:0007669"/>
    <property type="project" value="UniProtKB-UniRule"/>
</dbReference>
<dbReference type="GO" id="GO:0020037">
    <property type="term" value="F:heme binding"/>
    <property type="evidence" value="ECO:0007669"/>
    <property type="project" value="InterPro"/>
</dbReference>
<dbReference type="GO" id="GO:0005506">
    <property type="term" value="F:iron ion binding"/>
    <property type="evidence" value="ECO:0007669"/>
    <property type="project" value="UniProtKB-UniRule"/>
</dbReference>
<dbReference type="GO" id="GO:0042279">
    <property type="term" value="F:nitrite reductase (cytochrome, ammonia-forming) activity"/>
    <property type="evidence" value="ECO:0007669"/>
    <property type="project" value="UniProtKB-UniRule"/>
</dbReference>
<dbReference type="GO" id="GO:0019645">
    <property type="term" value="P:anaerobic electron transport chain"/>
    <property type="evidence" value="ECO:0007669"/>
    <property type="project" value="TreeGrafter"/>
</dbReference>
<dbReference type="GO" id="GO:0042128">
    <property type="term" value="P:nitrate assimilation"/>
    <property type="evidence" value="ECO:0007669"/>
    <property type="project" value="UniProtKB-UniRule"/>
</dbReference>
<dbReference type="CDD" id="cd00548">
    <property type="entry name" value="NrfA-like"/>
    <property type="match status" value="1"/>
</dbReference>
<dbReference type="FunFam" id="1.10.1130.10:FF:000002">
    <property type="entry name" value="Cytochrome c-552"/>
    <property type="match status" value="1"/>
</dbReference>
<dbReference type="FunFam" id="1.20.140.10:FF:000014">
    <property type="entry name" value="Cytochrome c-552"/>
    <property type="match status" value="1"/>
</dbReference>
<dbReference type="Gene3D" id="1.20.140.10">
    <property type="entry name" value="Butyryl-CoA Dehydrogenase, subunit A, domain 3"/>
    <property type="match status" value="1"/>
</dbReference>
<dbReference type="Gene3D" id="1.10.1130.10">
    <property type="entry name" value="Flavocytochrome C3, Chain A"/>
    <property type="match status" value="1"/>
</dbReference>
<dbReference type="HAMAP" id="MF_01182">
    <property type="entry name" value="Cytochrom_C552"/>
    <property type="match status" value="1"/>
</dbReference>
<dbReference type="InterPro" id="IPR003321">
    <property type="entry name" value="Cyt_c552"/>
</dbReference>
<dbReference type="InterPro" id="IPR017570">
    <property type="entry name" value="Cyt_c_NO2Rdtase_formate-dep"/>
</dbReference>
<dbReference type="InterPro" id="IPR036280">
    <property type="entry name" value="Multihaem_cyt_sf"/>
</dbReference>
<dbReference type="NCBIfam" id="TIGR03152">
    <property type="entry name" value="cyto_c552_HCOOH"/>
    <property type="match status" value="1"/>
</dbReference>
<dbReference type="NCBIfam" id="NF008339">
    <property type="entry name" value="PRK11125.1"/>
    <property type="match status" value="1"/>
</dbReference>
<dbReference type="PANTHER" id="PTHR30633:SF0">
    <property type="entry name" value="CYTOCHROME C-552"/>
    <property type="match status" value="1"/>
</dbReference>
<dbReference type="PANTHER" id="PTHR30633">
    <property type="entry name" value="CYTOCHROME C-552 RESPIRATORY NITRITE REDUCTASE"/>
    <property type="match status" value="1"/>
</dbReference>
<dbReference type="Pfam" id="PF02335">
    <property type="entry name" value="Cytochrom_C552"/>
    <property type="match status" value="1"/>
</dbReference>
<dbReference type="PIRSF" id="PIRSF000243">
    <property type="entry name" value="Cyt_c552"/>
    <property type="match status" value="1"/>
</dbReference>
<dbReference type="SUPFAM" id="SSF48695">
    <property type="entry name" value="Multiheme cytochromes"/>
    <property type="match status" value="1"/>
</dbReference>
<dbReference type="PROSITE" id="PS51008">
    <property type="entry name" value="MULTIHEME_CYTC"/>
    <property type="match status" value="1"/>
</dbReference>
<keyword id="KW-0106">Calcium</keyword>
<keyword id="KW-0249">Electron transport</keyword>
<keyword id="KW-0349">Heme</keyword>
<keyword id="KW-0408">Iron</keyword>
<keyword id="KW-0479">Metal-binding</keyword>
<keyword id="KW-0560">Oxidoreductase</keyword>
<keyword id="KW-0574">Periplasm</keyword>
<keyword id="KW-0732">Signal</keyword>
<keyword id="KW-0813">Transport</keyword>
<accession>B6I5T8</accession>
<feature type="signal peptide" evidence="1">
    <location>
        <begin position="1"/>
        <end position="26"/>
    </location>
</feature>
<feature type="chain" id="PRO_1000138215" description="Cytochrome c-552">
    <location>
        <begin position="27"/>
        <end position="478"/>
    </location>
</feature>
<feature type="binding site" description="axial binding residue" evidence="1">
    <location>
        <position position="94"/>
    </location>
    <ligand>
        <name>heme c</name>
        <dbReference type="ChEBI" id="CHEBI:61717"/>
        <label>3</label>
    </ligand>
    <ligandPart>
        <name>Fe</name>
        <dbReference type="ChEBI" id="CHEBI:18248"/>
    </ligandPart>
</feature>
<feature type="binding site" description="covalent" evidence="1">
    <location>
        <position position="122"/>
    </location>
    <ligand>
        <name>heme</name>
        <dbReference type="ChEBI" id="CHEBI:30413"/>
        <label>1</label>
    </ligand>
</feature>
<feature type="binding site" description="covalent" evidence="1">
    <location>
        <position position="125"/>
    </location>
    <ligand>
        <name>heme</name>
        <dbReference type="ChEBI" id="CHEBI:30413"/>
        <label>1</label>
    </ligand>
</feature>
<feature type="binding site" description="axial binding residue" evidence="1">
    <location>
        <position position="126"/>
    </location>
    <ligand>
        <name>heme</name>
        <dbReference type="ChEBI" id="CHEBI:30413"/>
        <label>1</label>
    </ligand>
    <ligandPart>
        <name>Fe</name>
        <dbReference type="ChEBI" id="CHEBI:18248"/>
    </ligandPart>
</feature>
<feature type="binding site" description="covalent" evidence="1">
    <location>
        <position position="160"/>
    </location>
    <ligand>
        <name>heme c</name>
        <dbReference type="ChEBI" id="CHEBI:61717"/>
        <label>2</label>
    </ligand>
</feature>
<feature type="binding site" description="covalent" evidence="1">
    <location>
        <position position="163"/>
    </location>
    <ligand>
        <name>heme c</name>
        <dbReference type="ChEBI" id="CHEBI:61717"/>
        <label>2</label>
    </ligand>
</feature>
<feature type="binding site" description="axial binding residue" evidence="1">
    <location>
        <position position="164"/>
    </location>
    <ligand>
        <name>heme c</name>
        <dbReference type="ChEBI" id="CHEBI:61717"/>
        <label>2</label>
    </ligand>
    <ligandPart>
        <name>Fe</name>
        <dbReference type="ChEBI" id="CHEBI:18248"/>
    </ligandPart>
</feature>
<feature type="binding site" description="covalent" evidence="1">
    <location>
        <position position="209"/>
    </location>
    <ligand>
        <name>heme c</name>
        <dbReference type="ChEBI" id="CHEBI:61717"/>
        <label>3</label>
    </ligand>
</feature>
<feature type="binding site" description="covalent" evidence="1">
    <location>
        <position position="212"/>
    </location>
    <ligand>
        <name>heme c</name>
        <dbReference type="ChEBI" id="CHEBI:61717"/>
        <label>3</label>
    </ligand>
</feature>
<feature type="binding site" description="axial binding residue" evidence="1">
    <location>
        <position position="213"/>
    </location>
    <ligand>
        <name>heme c</name>
        <dbReference type="ChEBI" id="CHEBI:61717"/>
        <label>3</label>
    </ligand>
    <ligandPart>
        <name>Fe</name>
        <dbReference type="ChEBI" id="CHEBI:18248"/>
    </ligandPart>
</feature>
<feature type="binding site" evidence="1">
    <location>
        <position position="215"/>
    </location>
    <ligand>
        <name>Ca(2+)</name>
        <dbReference type="ChEBI" id="CHEBI:29108"/>
    </ligand>
</feature>
<feature type="binding site" evidence="1">
    <location>
        <position position="216"/>
    </location>
    <ligand>
        <name>Ca(2+)</name>
        <dbReference type="ChEBI" id="CHEBI:29108"/>
    </ligand>
</feature>
<feature type="binding site" evidence="1">
    <location>
        <position position="216"/>
    </location>
    <ligand>
        <name>substrate</name>
    </ligand>
</feature>
<feature type="binding site" evidence="1">
    <location>
        <position position="261"/>
    </location>
    <ligand>
        <name>Ca(2+)</name>
        <dbReference type="ChEBI" id="CHEBI:29108"/>
    </ligand>
</feature>
<feature type="binding site" evidence="1">
    <location>
        <position position="263"/>
    </location>
    <ligand>
        <name>Ca(2+)</name>
        <dbReference type="ChEBI" id="CHEBI:29108"/>
    </ligand>
</feature>
<feature type="binding site" evidence="1">
    <location>
        <position position="264"/>
    </location>
    <ligand>
        <name>substrate</name>
    </ligand>
</feature>
<feature type="binding site" description="axial binding residue" evidence="1">
    <location>
        <position position="275"/>
    </location>
    <ligand>
        <name>heme c</name>
        <dbReference type="ChEBI" id="CHEBI:61717"/>
        <label>5</label>
    </ligand>
    <ligandPart>
        <name>Fe</name>
        <dbReference type="ChEBI" id="CHEBI:18248"/>
    </ligandPart>
</feature>
<feature type="binding site" description="covalent" evidence="1">
    <location>
        <position position="282"/>
    </location>
    <ligand>
        <name>heme c</name>
        <dbReference type="ChEBI" id="CHEBI:61717"/>
        <label>4</label>
    </ligand>
</feature>
<feature type="binding site" description="covalent" evidence="1">
    <location>
        <position position="285"/>
    </location>
    <ligand>
        <name>heme c</name>
        <dbReference type="ChEBI" id="CHEBI:61717"/>
        <label>4</label>
    </ligand>
</feature>
<feature type="binding site" description="axial binding residue" evidence="1">
    <location>
        <position position="286"/>
    </location>
    <ligand>
        <name>heme c</name>
        <dbReference type="ChEBI" id="CHEBI:61717"/>
        <label>4</label>
    </ligand>
    <ligandPart>
        <name>Fe</name>
        <dbReference type="ChEBI" id="CHEBI:18248"/>
    </ligandPart>
</feature>
<feature type="binding site" description="axial binding residue" evidence="1">
    <location>
        <position position="301"/>
    </location>
    <ligand>
        <name>heme c</name>
        <dbReference type="ChEBI" id="CHEBI:61717"/>
        <label>2</label>
    </ligand>
    <ligandPart>
        <name>Fe</name>
        <dbReference type="ChEBI" id="CHEBI:18248"/>
    </ligandPart>
</feature>
<feature type="binding site" description="covalent" evidence="1">
    <location>
        <position position="314"/>
    </location>
    <ligand>
        <name>heme c</name>
        <dbReference type="ChEBI" id="CHEBI:61717"/>
        <label>5</label>
    </ligand>
</feature>
<feature type="binding site" description="covalent" evidence="1">
    <location>
        <position position="317"/>
    </location>
    <ligand>
        <name>heme c</name>
        <dbReference type="ChEBI" id="CHEBI:61717"/>
        <label>5</label>
    </ligand>
</feature>
<feature type="binding site" description="axial binding residue" evidence="1">
    <location>
        <position position="318"/>
    </location>
    <ligand>
        <name>heme c</name>
        <dbReference type="ChEBI" id="CHEBI:61717"/>
        <label>5</label>
    </ligand>
    <ligandPart>
        <name>Fe</name>
        <dbReference type="ChEBI" id="CHEBI:18248"/>
    </ligandPart>
</feature>
<feature type="binding site" description="axial binding residue" evidence="1">
    <location>
        <position position="393"/>
    </location>
    <ligand>
        <name>heme c</name>
        <dbReference type="ChEBI" id="CHEBI:61717"/>
        <label>4</label>
    </ligand>
    <ligandPart>
        <name>Fe</name>
        <dbReference type="ChEBI" id="CHEBI:18248"/>
    </ligandPart>
</feature>
<proteinExistence type="inferred from homology"/>
<comment type="function">
    <text evidence="1">Catalyzes the reduction of nitrite to ammonia, consuming six electrons in the process.</text>
</comment>
<comment type="catalytic activity">
    <reaction evidence="1">
        <text>6 Fe(III)-[cytochrome c] + NH4(+) + 2 H2O = 6 Fe(II)-[cytochrome c] + nitrite + 8 H(+)</text>
        <dbReference type="Rhea" id="RHEA:13089"/>
        <dbReference type="Rhea" id="RHEA-COMP:10350"/>
        <dbReference type="Rhea" id="RHEA-COMP:14399"/>
        <dbReference type="ChEBI" id="CHEBI:15377"/>
        <dbReference type="ChEBI" id="CHEBI:15378"/>
        <dbReference type="ChEBI" id="CHEBI:16301"/>
        <dbReference type="ChEBI" id="CHEBI:28938"/>
        <dbReference type="ChEBI" id="CHEBI:29033"/>
        <dbReference type="ChEBI" id="CHEBI:29034"/>
        <dbReference type="EC" id="1.7.2.2"/>
    </reaction>
</comment>
<comment type="cofactor">
    <cofactor evidence="1">
        <name>Ca(2+)</name>
        <dbReference type="ChEBI" id="CHEBI:29108"/>
    </cofactor>
    <text evidence="1">Binds 1 Ca(2+) ion per monomer.</text>
</comment>
<comment type="cofactor">
    <cofactor evidence="1">
        <name>heme c</name>
        <dbReference type="ChEBI" id="CHEBI:61717"/>
    </cofactor>
    <text evidence="1">Binds 5 heme c groups covalently per monomer.</text>
</comment>
<comment type="pathway">
    <text evidence="1">Nitrogen metabolism; nitrate reduction (assimilation).</text>
</comment>
<comment type="subcellular location">
    <subcellularLocation>
        <location evidence="1">Periplasm</location>
    </subcellularLocation>
</comment>
<comment type="similarity">
    <text evidence="1">Belongs to the cytochrome c-552 family.</text>
</comment>
<reference key="1">
    <citation type="journal article" date="2008" name="DNA Res.">
        <title>Complete genome sequence and comparative analysis of the wild-type commensal Escherichia coli strain SE11 isolated from a healthy adult.</title>
        <authorList>
            <person name="Oshima K."/>
            <person name="Toh H."/>
            <person name="Ogura Y."/>
            <person name="Sasamoto H."/>
            <person name="Morita H."/>
            <person name="Park S.-H."/>
            <person name="Ooka T."/>
            <person name="Iyoda S."/>
            <person name="Taylor T.D."/>
            <person name="Hayashi T."/>
            <person name="Itoh K."/>
            <person name="Hattori M."/>
        </authorList>
    </citation>
    <scope>NUCLEOTIDE SEQUENCE [LARGE SCALE GENOMIC DNA]</scope>
    <source>
        <strain>SE11</strain>
    </source>
</reference>
<protein>
    <recommendedName>
        <fullName evidence="1">Cytochrome c-552</fullName>
        <ecNumber evidence="1">1.7.2.2</ecNumber>
    </recommendedName>
    <alternativeName>
        <fullName evidence="1">Ammonia-forming cytochrome c nitrite reductase</fullName>
        <shortName evidence="1">Cytochrome c nitrite reductase</shortName>
    </alternativeName>
</protein>
<sequence>MTRIKINARRIFSLLIPFFFFTSVHAEQTAAPAKPVTVEAKNETFAPQHPDQYLSWKATSEQSERVDALAEDPRLVILWAGYPFSRDYNKPRGHAFAVTDVRETLRTGAPKNAEDGPLPMACWSCKSPDVARLIQKDGEDGYFHGKWARGGPEIVNNLGCADCHNTASPEFAKGKPELTLSRPYAARAMEAIGKPFEKAGRFDQQSMVCGQCHVEYYFDGKNKAVKFPWDDGMKVENMEQYYDKIAFSDWTNSLSKTPMLKAQHPEYETWTAGIHGKNNVTCIDCHMPKVQNAEGKLYTDHKIGNPFDNFAQTCANCHTQDKAALQKVVAERKQSINDLKIKVEDQLVHAHFEAKAALDAGATEAEMKPIQDDIRHAQWRWDLAIASHGIHMHAPEEGLRMLGTAMDKAADARTKLARLLATKGITHEIQIPDISTKEKAQQAIGLNMEQIKAEKQDFIKTVIPQWEEQARKNGLLSQ</sequence>
<gene>
    <name evidence="1" type="primary">nrfA</name>
    <name type="ordered locus">ECSE_4365</name>
</gene>
<organism>
    <name type="scientific">Escherichia coli (strain SE11)</name>
    <dbReference type="NCBI Taxonomy" id="409438"/>
    <lineage>
        <taxon>Bacteria</taxon>
        <taxon>Pseudomonadati</taxon>
        <taxon>Pseudomonadota</taxon>
        <taxon>Gammaproteobacteria</taxon>
        <taxon>Enterobacterales</taxon>
        <taxon>Enterobacteriaceae</taxon>
        <taxon>Escherichia</taxon>
    </lineage>
</organism>
<evidence type="ECO:0000255" key="1">
    <source>
        <dbReference type="HAMAP-Rule" id="MF_01182"/>
    </source>
</evidence>